<gene>
    <name type="primary">LANCL2</name>
    <name type="synonym">GPR69B</name>
    <name type="synonym">TASP</name>
</gene>
<protein>
    <recommendedName>
        <fullName>LanC-like protein 2</fullName>
    </recommendedName>
    <alternativeName>
        <fullName>Testis-specific adriamycin sensitivity protein</fullName>
    </alternativeName>
</protein>
<name>LANC2_HUMAN</name>
<comment type="function">
    <text evidence="7">Necessary for abscisic acid (ABA) binding on the cell membrane and activation of the ABA signaling pathway in granulocytes.</text>
</comment>
<comment type="subunit">
    <text evidence="6">Interacts with an array of inositol phospholipids such as phosphatidylinositol 3-phosphate (PI3P), phosphatidylinositol 4-phosphate (PI4P) and phosphatidylinositol 5-phosphate (PI5P). PIP-binding enhances membrane association.</text>
</comment>
<comment type="interaction">
    <interactant intactId="EBI-2510837">
        <id>Q9NS86</id>
    </interactant>
    <interactant intactId="EBI-743771">
        <id>Q92624</id>
        <label>APPBP2</label>
    </interactant>
    <organismsDiffer>false</organismsDiffer>
    <experiments>6</experiments>
</comment>
<comment type="interaction">
    <interactant intactId="EBI-2510837">
        <id>Q9NS86</id>
    </interactant>
    <interactant intactId="EBI-11522811">
        <id>Q8IUQ4-2</id>
        <label>SIAH1</label>
    </interactant>
    <organismsDiffer>false</organismsDiffer>
    <experiments>3</experiments>
</comment>
<comment type="interaction">
    <interactant intactId="EBI-2510837">
        <id>Q9NS86</id>
    </interactant>
    <interactant intactId="EBI-12842466">
        <id>Q9Y2W6</id>
        <label>TDRKH</label>
    </interactant>
    <organismsDiffer>false</organismsDiffer>
    <experiments>3</experiments>
</comment>
<comment type="interaction">
    <interactant intactId="EBI-2510837">
        <id>Q9NS86</id>
    </interactant>
    <interactant intactId="EBI-750109">
        <id>Q9NYB0</id>
        <label>TERF2IP</label>
    </interactant>
    <organismsDiffer>false</organismsDiffer>
    <experiments>2</experiments>
</comment>
<comment type="subcellular location">
    <subcellularLocation>
        <location evidence="3">Nucleus</location>
    </subcellularLocation>
    <subcellularLocation>
        <location evidence="3">Cytoplasm</location>
    </subcellularLocation>
    <subcellularLocation>
        <location evidence="3 6">Cell membrane</location>
    </subcellularLocation>
    <text evidence="6">Localizes to the juxta-nuclear vesicles (PubMed:16979580). Associates with the cortical actin cytoskeleton (PubMed:16979580). Cholesterol depletion by methyl-beta-cyclodextrin causes partial dissociation from the cell membrane in vitro and an enhanced cell detachment from the matrix in vivo (PubMed:16979580). Membrane-association is important for the increased cellular sensitivity to an anticancer drug (adriamycin) (PubMed:16979580).</text>
</comment>
<comment type="tissue specificity">
    <text evidence="2">Expressed in brain and testis.</text>
</comment>
<comment type="PTM">
    <text evidence="6">Myristoylated. Essential for membrane association.</text>
</comment>
<comment type="miscellaneous">
    <text>Its exogenous expression in a sarcoma cell line decreases the expression of ABCB1 (P-glycoprotein 1) and increases cellular sensitivity to an anticancer drug (adriamycin).</text>
</comment>
<comment type="similarity">
    <text evidence="9">Belongs to the LanC-like protein family.</text>
</comment>
<proteinExistence type="evidence at protein level"/>
<dbReference type="EMBL" id="AJ278245">
    <property type="protein sequence ID" value="CAC21715.1"/>
    <property type="molecule type" value="mRNA"/>
</dbReference>
<dbReference type="EMBL" id="AB035966">
    <property type="protein sequence ID" value="BAA96800.1"/>
    <property type="molecule type" value="mRNA"/>
</dbReference>
<dbReference type="EMBL" id="AF353942">
    <property type="protein sequence ID" value="AAK83286.1"/>
    <property type="molecule type" value="mRNA"/>
</dbReference>
<dbReference type="EMBL" id="AK313326">
    <property type="protein sequence ID" value="BAG36131.1"/>
    <property type="molecule type" value="mRNA"/>
</dbReference>
<dbReference type="EMBL" id="AC073347">
    <property type="protein sequence ID" value="AAQ93360.1"/>
    <property type="molecule type" value="Genomic_DNA"/>
</dbReference>
<dbReference type="EMBL" id="CH236957">
    <property type="protein sequence ID" value="EAL23810.1"/>
    <property type="molecule type" value="Genomic_DNA"/>
</dbReference>
<dbReference type="EMBL" id="CH471201">
    <property type="protein sequence ID" value="EAW50968.1"/>
    <property type="molecule type" value="Genomic_DNA"/>
</dbReference>
<dbReference type="EMBL" id="BC004887">
    <property type="protein sequence ID" value="AAH04887.2"/>
    <property type="molecule type" value="mRNA"/>
</dbReference>
<dbReference type="EMBL" id="BC070049">
    <property type="protein sequence ID" value="AAH70049.1"/>
    <property type="molecule type" value="mRNA"/>
</dbReference>
<dbReference type="EMBL" id="AL713665">
    <property type="protein sequence ID" value="CAD28471.1"/>
    <property type="molecule type" value="mRNA"/>
</dbReference>
<dbReference type="CCDS" id="CCDS5517.1"/>
<dbReference type="RefSeq" id="NP_061167.1">
    <property type="nucleotide sequence ID" value="NM_018697.4"/>
</dbReference>
<dbReference type="PDB" id="6WQ1">
    <property type="method" value="X-ray"/>
    <property type="resolution" value="2.29 A"/>
    <property type="chains" value="A/B/C/D=1-450"/>
</dbReference>
<dbReference type="PDBsum" id="6WQ1"/>
<dbReference type="SMR" id="Q9NS86"/>
<dbReference type="BioGRID" id="120998">
    <property type="interactions" value="92"/>
</dbReference>
<dbReference type="FunCoup" id="Q9NS86">
    <property type="interactions" value="2073"/>
</dbReference>
<dbReference type="IntAct" id="Q9NS86">
    <property type="interactions" value="41"/>
</dbReference>
<dbReference type="MINT" id="Q9NS86"/>
<dbReference type="STRING" id="9606.ENSP00000254770"/>
<dbReference type="BindingDB" id="Q9NS86"/>
<dbReference type="ChEMBL" id="CHEMBL3351212"/>
<dbReference type="DrugBank" id="DB19277">
    <property type="generic name" value="Omilancor"/>
</dbReference>
<dbReference type="GuidetoPHARMACOLOGY" id="3082"/>
<dbReference type="GlyGen" id="Q9NS86">
    <property type="glycosylation" value="1 site, 1 O-linked glycan (1 site)"/>
</dbReference>
<dbReference type="iPTMnet" id="Q9NS86"/>
<dbReference type="MetOSite" id="Q9NS86"/>
<dbReference type="PhosphoSitePlus" id="Q9NS86"/>
<dbReference type="SwissPalm" id="Q9NS86"/>
<dbReference type="BioMuta" id="LANCL2"/>
<dbReference type="DMDM" id="47116933"/>
<dbReference type="CPTAC" id="CPTAC-532"/>
<dbReference type="CPTAC" id="CPTAC-533"/>
<dbReference type="jPOST" id="Q9NS86"/>
<dbReference type="MassIVE" id="Q9NS86"/>
<dbReference type="PaxDb" id="9606-ENSP00000254770"/>
<dbReference type="PeptideAtlas" id="Q9NS86"/>
<dbReference type="ProteomicsDB" id="82510"/>
<dbReference type="Pumba" id="Q9NS86"/>
<dbReference type="Antibodypedia" id="13819">
    <property type="antibodies" value="221 antibodies from 20 providers"/>
</dbReference>
<dbReference type="DNASU" id="55915"/>
<dbReference type="Ensembl" id="ENST00000254770.3">
    <property type="protein sequence ID" value="ENSP00000254770.2"/>
    <property type="gene ID" value="ENSG00000132434.10"/>
</dbReference>
<dbReference type="GeneID" id="55915"/>
<dbReference type="KEGG" id="hsa:55915"/>
<dbReference type="MANE-Select" id="ENST00000254770.3">
    <property type="protein sequence ID" value="ENSP00000254770.2"/>
    <property type="RefSeq nucleotide sequence ID" value="NM_018697.4"/>
    <property type="RefSeq protein sequence ID" value="NP_061167.1"/>
</dbReference>
<dbReference type="UCSC" id="uc003tqp.3">
    <property type="organism name" value="human"/>
</dbReference>
<dbReference type="AGR" id="HGNC:6509"/>
<dbReference type="CTD" id="55915"/>
<dbReference type="DisGeNET" id="55915"/>
<dbReference type="GeneCards" id="LANCL2"/>
<dbReference type="HGNC" id="HGNC:6509">
    <property type="gene designation" value="LANCL2"/>
</dbReference>
<dbReference type="HPA" id="ENSG00000132434">
    <property type="expression patterns" value="Low tissue specificity"/>
</dbReference>
<dbReference type="MIM" id="612919">
    <property type="type" value="gene"/>
</dbReference>
<dbReference type="neXtProt" id="NX_Q9NS86"/>
<dbReference type="OpenTargets" id="ENSG00000132434"/>
<dbReference type="PharmGKB" id="PA30294"/>
<dbReference type="VEuPathDB" id="HostDB:ENSG00000132434"/>
<dbReference type="eggNOG" id="KOG2787">
    <property type="taxonomic scope" value="Eukaryota"/>
</dbReference>
<dbReference type="GeneTree" id="ENSGT00530000063186"/>
<dbReference type="HOGENOM" id="CLU_036244_0_0_1"/>
<dbReference type="InParanoid" id="Q9NS86"/>
<dbReference type="OMA" id="LSLYFEW"/>
<dbReference type="OrthoDB" id="10257263at2759"/>
<dbReference type="PAN-GO" id="Q9NS86">
    <property type="GO annotations" value="1 GO annotation based on evolutionary models"/>
</dbReference>
<dbReference type="PhylomeDB" id="Q9NS86"/>
<dbReference type="TreeFam" id="TF300068"/>
<dbReference type="PathwayCommons" id="Q9NS86"/>
<dbReference type="SignaLink" id="Q9NS86"/>
<dbReference type="BioGRID-ORCS" id="55915">
    <property type="hits" value="10 hits in 1161 CRISPR screens"/>
</dbReference>
<dbReference type="CD-CODE" id="FB4E32DD">
    <property type="entry name" value="Presynaptic clusters and postsynaptic densities"/>
</dbReference>
<dbReference type="ChiTaRS" id="LANCL2">
    <property type="organism name" value="human"/>
</dbReference>
<dbReference type="GeneWiki" id="LANCL2"/>
<dbReference type="GenomeRNAi" id="55915"/>
<dbReference type="Pharos" id="Q9NS86">
    <property type="development level" value="Tchem"/>
</dbReference>
<dbReference type="PRO" id="PR:Q9NS86"/>
<dbReference type="Proteomes" id="UP000005640">
    <property type="component" value="Chromosome 7"/>
</dbReference>
<dbReference type="RNAct" id="Q9NS86">
    <property type="molecule type" value="protein"/>
</dbReference>
<dbReference type="Bgee" id="ENSG00000132434">
    <property type="expression patterns" value="Expressed in middle temporal gyrus and 177 other cell types or tissues"/>
</dbReference>
<dbReference type="ExpressionAtlas" id="Q9NS86">
    <property type="expression patterns" value="baseline and differential"/>
</dbReference>
<dbReference type="GO" id="GO:0030864">
    <property type="term" value="C:cortical actin cytoskeleton"/>
    <property type="evidence" value="ECO:0000314"/>
    <property type="project" value="UniProtKB"/>
</dbReference>
<dbReference type="GO" id="GO:0005829">
    <property type="term" value="C:cytosol"/>
    <property type="evidence" value="ECO:0000314"/>
    <property type="project" value="UniProtKB"/>
</dbReference>
<dbReference type="GO" id="GO:0005654">
    <property type="term" value="C:nucleoplasm"/>
    <property type="evidence" value="ECO:0000314"/>
    <property type="project" value="HPA"/>
</dbReference>
<dbReference type="GO" id="GO:0005634">
    <property type="term" value="C:nucleus"/>
    <property type="evidence" value="ECO:0000314"/>
    <property type="project" value="UniProtKB"/>
</dbReference>
<dbReference type="GO" id="GO:0005886">
    <property type="term" value="C:plasma membrane"/>
    <property type="evidence" value="ECO:0000314"/>
    <property type="project" value="UniProtKB"/>
</dbReference>
<dbReference type="GO" id="GO:0005524">
    <property type="term" value="F:ATP binding"/>
    <property type="evidence" value="ECO:0000303"/>
    <property type="project" value="UniProtKB"/>
</dbReference>
<dbReference type="GO" id="GO:0005525">
    <property type="term" value="F:GTP binding"/>
    <property type="evidence" value="ECO:0000303"/>
    <property type="project" value="UniProtKB"/>
</dbReference>
<dbReference type="GO" id="GO:0032266">
    <property type="term" value="F:phosphatidylinositol-3-phosphate binding"/>
    <property type="evidence" value="ECO:0000314"/>
    <property type="project" value="UniProtKB"/>
</dbReference>
<dbReference type="GO" id="GO:0070273">
    <property type="term" value="F:phosphatidylinositol-4-phosphate binding"/>
    <property type="evidence" value="ECO:0000314"/>
    <property type="project" value="UniProtKB"/>
</dbReference>
<dbReference type="GO" id="GO:0010314">
    <property type="term" value="F:phosphatidylinositol-5-phosphate binding"/>
    <property type="evidence" value="ECO:0000314"/>
    <property type="project" value="UniProtKB"/>
</dbReference>
<dbReference type="GO" id="GO:0005975">
    <property type="term" value="P:carbohydrate metabolic process"/>
    <property type="evidence" value="ECO:0007669"/>
    <property type="project" value="InterPro"/>
</dbReference>
<dbReference type="GO" id="GO:0045892">
    <property type="term" value="P:negative regulation of DNA-templated transcription"/>
    <property type="evidence" value="ECO:0000314"/>
    <property type="project" value="UniProtKB"/>
</dbReference>
<dbReference type="GO" id="GO:0031179">
    <property type="term" value="P:peptide modification"/>
    <property type="evidence" value="ECO:0007669"/>
    <property type="project" value="InterPro"/>
</dbReference>
<dbReference type="GO" id="GO:0009789">
    <property type="term" value="P:positive regulation of abscisic acid-activated signaling pathway"/>
    <property type="evidence" value="ECO:0000314"/>
    <property type="project" value="UniProtKB"/>
</dbReference>
<dbReference type="CDD" id="cd04794">
    <property type="entry name" value="euk_LANCL"/>
    <property type="match status" value="1"/>
</dbReference>
<dbReference type="FunFam" id="1.50.10.10:FF:000022">
    <property type="entry name" value="LanC like 2"/>
    <property type="match status" value="1"/>
</dbReference>
<dbReference type="Gene3D" id="1.50.10.10">
    <property type="match status" value="1"/>
</dbReference>
<dbReference type="InterPro" id="IPR012341">
    <property type="entry name" value="6hp_glycosidase-like_sf"/>
</dbReference>
<dbReference type="InterPro" id="IPR007822">
    <property type="entry name" value="LANC-like"/>
</dbReference>
<dbReference type="InterPro" id="IPR020464">
    <property type="entry name" value="LanC-like_prot_euk"/>
</dbReference>
<dbReference type="PANTHER" id="PTHR12736">
    <property type="entry name" value="LANC-LIKE PROTEIN"/>
    <property type="match status" value="1"/>
</dbReference>
<dbReference type="PANTHER" id="PTHR12736:SF11">
    <property type="entry name" value="LANC-LIKE PROTEIN 2"/>
    <property type="match status" value="1"/>
</dbReference>
<dbReference type="Pfam" id="PF05147">
    <property type="entry name" value="LANC_like"/>
    <property type="match status" value="1"/>
</dbReference>
<dbReference type="PRINTS" id="PR01951">
    <property type="entry name" value="LANCEUKARYTE"/>
</dbReference>
<dbReference type="PRINTS" id="PR01950">
    <property type="entry name" value="LANCSUPER"/>
</dbReference>
<dbReference type="SMART" id="SM01260">
    <property type="entry name" value="LANC_like"/>
    <property type="match status" value="1"/>
</dbReference>
<dbReference type="SUPFAM" id="SSF158745">
    <property type="entry name" value="LanC-like"/>
    <property type="match status" value="1"/>
</dbReference>
<keyword id="KW-0002">3D-structure</keyword>
<keyword id="KW-1003">Cell membrane</keyword>
<keyword id="KW-0963">Cytoplasm</keyword>
<keyword id="KW-0449">Lipoprotein</keyword>
<keyword id="KW-0472">Membrane</keyword>
<keyword id="KW-0519">Myristate</keyword>
<keyword id="KW-0539">Nucleus</keyword>
<keyword id="KW-0597">Phosphoprotein</keyword>
<keyword id="KW-1267">Proteomics identification</keyword>
<keyword id="KW-1185">Reference proteome</keyword>
<organism>
    <name type="scientific">Homo sapiens</name>
    <name type="common">Human</name>
    <dbReference type="NCBI Taxonomy" id="9606"/>
    <lineage>
        <taxon>Eukaryota</taxon>
        <taxon>Metazoa</taxon>
        <taxon>Chordata</taxon>
        <taxon>Craniata</taxon>
        <taxon>Vertebrata</taxon>
        <taxon>Euteleostomi</taxon>
        <taxon>Mammalia</taxon>
        <taxon>Eutheria</taxon>
        <taxon>Euarchontoglires</taxon>
        <taxon>Primates</taxon>
        <taxon>Haplorrhini</taxon>
        <taxon>Catarrhini</taxon>
        <taxon>Hominidae</taxon>
        <taxon>Homo</taxon>
    </lineage>
</organism>
<evidence type="ECO:0000250" key="1">
    <source>
        <dbReference type="UniProtKB" id="Q9JJK2"/>
    </source>
</evidence>
<evidence type="ECO:0000269" key="2">
    <source>
    </source>
</evidence>
<evidence type="ECO:0000269" key="3">
    <source>
    </source>
</evidence>
<evidence type="ECO:0000269" key="4">
    <source>
    </source>
</evidence>
<evidence type="ECO:0000269" key="5">
    <source>
    </source>
</evidence>
<evidence type="ECO:0000269" key="6">
    <source>
    </source>
</evidence>
<evidence type="ECO:0000269" key="7">
    <source>
    </source>
</evidence>
<evidence type="ECO:0000269" key="8">
    <source ref="7"/>
</evidence>
<evidence type="ECO:0000305" key="9"/>
<evidence type="ECO:0007829" key="10">
    <source>
        <dbReference type="PDB" id="6WQ1"/>
    </source>
</evidence>
<accession>Q9NS86</accession>
<accession>B2R8D4</accession>
<accession>Q6NSL4</accession>
<accession>Q8TCQ3</accession>
<accession>Q9BSR1</accession>
<feature type="initiator methionine" description="Removed">
    <location>
        <position position="1"/>
    </location>
</feature>
<feature type="chain" id="PRO_0000191272" description="LanC-like protein 2">
    <location>
        <begin position="2"/>
        <end position="450"/>
    </location>
</feature>
<feature type="region of interest" description="Interaction with inositol phospholipids">
    <location>
        <begin position="2"/>
        <end position="15"/>
    </location>
</feature>
<feature type="modified residue" description="Phosphotyrosine" evidence="1">
    <location>
        <position position="198"/>
    </location>
</feature>
<feature type="lipid moiety-binding region" description="N-myristoyl glycine" evidence="6">
    <location>
        <position position="2"/>
    </location>
</feature>
<feature type="sequence variant" id="VAR_060064" description="In dbSNP:rs2272263." evidence="4 5 8">
    <original>T</original>
    <variation>P</variation>
    <location>
        <position position="56"/>
    </location>
</feature>
<feature type="sequence variant" id="VAR_053480" description="In dbSNP:rs6961412.">
    <original>I</original>
    <variation>V</variation>
    <location>
        <position position="74"/>
    </location>
</feature>
<feature type="mutagenesis site" description="Loss of membrane localization and results in localization to the nucleus, particularly to the nucleoli." evidence="6">
    <original>G</original>
    <variation>A</variation>
    <location>
        <position position="2"/>
    </location>
</feature>
<feature type="helix" evidence="10">
    <location>
        <begin position="71"/>
        <end position="92"/>
    </location>
</feature>
<feature type="turn" evidence="10">
    <location>
        <begin position="102"/>
        <end position="104"/>
    </location>
</feature>
<feature type="helix" evidence="10">
    <location>
        <begin position="106"/>
        <end position="120"/>
    </location>
</feature>
<feature type="helix" evidence="10">
    <location>
        <begin position="123"/>
        <end position="133"/>
    </location>
</feature>
<feature type="helix" evidence="10">
    <location>
        <begin position="134"/>
        <end position="136"/>
    </location>
</feature>
<feature type="turn" evidence="10">
    <location>
        <begin position="147"/>
        <end position="149"/>
    </location>
</feature>
<feature type="helix" evidence="10">
    <location>
        <begin position="152"/>
        <end position="164"/>
    </location>
</feature>
<feature type="helix" evidence="10">
    <location>
        <begin position="168"/>
        <end position="179"/>
    </location>
</feature>
<feature type="helix" evidence="10">
    <location>
        <begin position="182"/>
        <end position="186"/>
    </location>
</feature>
<feature type="strand" evidence="10">
    <location>
        <begin position="188"/>
        <end position="190"/>
    </location>
</feature>
<feature type="turn" evidence="10">
    <location>
        <begin position="196"/>
        <end position="198"/>
    </location>
</feature>
<feature type="helix" evidence="10">
    <location>
        <begin position="200"/>
        <end position="213"/>
    </location>
</feature>
<feature type="helix" evidence="10">
    <location>
        <begin position="221"/>
        <end position="241"/>
    </location>
</feature>
<feature type="turn" evidence="10">
    <location>
        <begin position="245"/>
        <end position="247"/>
    </location>
</feature>
<feature type="turn" evidence="10">
    <location>
        <begin position="262"/>
        <end position="264"/>
    </location>
</feature>
<feature type="helix" evidence="10">
    <location>
        <begin position="266"/>
        <end position="273"/>
    </location>
</feature>
<feature type="helix" evidence="10">
    <location>
        <begin position="276"/>
        <end position="278"/>
    </location>
</feature>
<feature type="helix" evidence="10">
    <location>
        <begin position="282"/>
        <end position="287"/>
    </location>
</feature>
<feature type="helix" evidence="10">
    <location>
        <begin position="289"/>
        <end position="297"/>
    </location>
</feature>
<feature type="strand" evidence="10">
    <location>
        <begin position="319"/>
        <end position="323"/>
    </location>
</feature>
<feature type="helix" evidence="10">
    <location>
        <begin position="324"/>
        <end position="338"/>
    </location>
</feature>
<feature type="helix" evidence="10">
    <location>
        <begin position="341"/>
        <end position="357"/>
    </location>
</feature>
<feature type="strand" evidence="10">
    <location>
        <begin position="359"/>
        <end position="362"/>
    </location>
</feature>
<feature type="strand" evidence="10">
    <location>
        <begin position="366"/>
        <end position="369"/>
    </location>
</feature>
<feature type="helix" evidence="10">
    <location>
        <begin position="370"/>
        <end position="384"/>
    </location>
</feature>
<feature type="helix" evidence="10">
    <location>
        <begin position="387"/>
        <end position="401"/>
    </location>
</feature>
<feature type="turn" evidence="10">
    <location>
        <begin position="402"/>
        <end position="404"/>
    </location>
</feature>
<feature type="turn" evidence="10">
    <location>
        <begin position="417"/>
        <end position="419"/>
    </location>
</feature>
<feature type="helix" evidence="10">
    <location>
        <begin position="421"/>
        <end position="431"/>
    </location>
</feature>
<feature type="helix" evidence="10">
    <location>
        <begin position="434"/>
        <end position="436"/>
    </location>
</feature>
<feature type="turn" evidence="10">
    <location>
        <begin position="440"/>
        <end position="442"/>
    </location>
</feature>
<sequence>MGETMSKRLKLHLGGEAEMEERAFVNPFPDYEAAAGALLASGAAEETGCVRPPATTDEPGLPFHQDGKIIHNFIRRIQTKIKDLLQQMEEGLKTADPHDCSAYTGWTGIALLYLQLYRVTCDQTYLLRSLDYVKRTLRNLNGRRVTFLCGDAGPLAVGAVIYHKLRSDCESQECVTKLLQLQRSVVCQESDLPDELLYGRAGYLYALLYLNTEIGPGTVCESAIKEVVNAIIESGKTLSREERKTERCPLLYQWHRKQYVGAAHGMAGIYYMLMQPAAKVDQETLTEMVKPSIDYVRHKKFRSGNYPSSLSNETDRLVHWCHGAPGVIHMLMQAYKVFKEEKYLKEAMECSDVIWQRGLLRKGYGICHGTAGNGYSFLSLYRLTQDKKYLYRACKFAEWCLDYGAHGCRIPDRPYSLFEGMAGAIHFLSDVLGPETSRFPAFELDSSKRD</sequence>
<reference key="1">
    <citation type="journal article" date="2001" name="DNA Seq.">
        <title>Molecular cloning, characterization, and tissue-specific expression of human LANCL2, a novel member of the LanC-like protein family.</title>
        <authorList>
            <person name="Mayer H."/>
            <person name="Pongratz M."/>
            <person name="Prohaska R."/>
        </authorList>
    </citation>
    <scope>NUCLEOTIDE SEQUENCE [MRNA]</scope>
    <scope>TISSUE SPECIFICITY</scope>
</reference>
<reference key="2">
    <citation type="submission" date="1999-12" db="EMBL/GenBank/DDBJ databases">
        <title>Isolation and identification of genes whose downregulation result in anticancer drug resistance.</title>
        <authorList>
            <person name="Sugimoto Y."/>
            <person name="Tsukahara S."/>
            <person name="Ishikawa E."/>
            <person name="Tsuruo T."/>
        </authorList>
    </citation>
    <scope>NUCLEOTIDE SEQUENCE [MRNA]</scope>
</reference>
<reference key="3">
    <citation type="submission" date="2001-02" db="EMBL/GenBank/DDBJ databases">
        <title>2 MB physical and transcript map of the 7p11.2 locus surrounding EGFR frequently amplified in glioblastoma multiforme.</title>
        <authorList>
            <person name="Eley G.D."/>
            <person name="Wang X.-Y."/>
            <person name="Frederick L."/>
            <person name="Hebrink D."/>
            <person name="Nash C."/>
            <person name="James C.D."/>
        </authorList>
    </citation>
    <scope>NUCLEOTIDE SEQUENCE [MRNA]</scope>
</reference>
<reference key="4">
    <citation type="journal article" date="2004" name="Nat. Genet.">
        <title>Complete sequencing and characterization of 21,243 full-length human cDNAs.</title>
        <authorList>
            <person name="Ota T."/>
            <person name="Suzuki Y."/>
            <person name="Nishikawa T."/>
            <person name="Otsuki T."/>
            <person name="Sugiyama T."/>
            <person name="Irie R."/>
            <person name="Wakamatsu A."/>
            <person name="Hayashi K."/>
            <person name="Sato H."/>
            <person name="Nagai K."/>
            <person name="Kimura K."/>
            <person name="Makita H."/>
            <person name="Sekine M."/>
            <person name="Obayashi M."/>
            <person name="Nishi T."/>
            <person name="Shibahara T."/>
            <person name="Tanaka T."/>
            <person name="Ishii S."/>
            <person name="Yamamoto J."/>
            <person name="Saito K."/>
            <person name="Kawai Y."/>
            <person name="Isono Y."/>
            <person name="Nakamura Y."/>
            <person name="Nagahari K."/>
            <person name="Murakami K."/>
            <person name="Yasuda T."/>
            <person name="Iwayanagi T."/>
            <person name="Wagatsuma M."/>
            <person name="Shiratori A."/>
            <person name="Sudo H."/>
            <person name="Hosoiri T."/>
            <person name="Kaku Y."/>
            <person name="Kodaira H."/>
            <person name="Kondo H."/>
            <person name="Sugawara M."/>
            <person name="Takahashi M."/>
            <person name="Kanda K."/>
            <person name="Yokoi T."/>
            <person name="Furuya T."/>
            <person name="Kikkawa E."/>
            <person name="Omura Y."/>
            <person name="Abe K."/>
            <person name="Kamihara K."/>
            <person name="Katsuta N."/>
            <person name="Sato K."/>
            <person name="Tanikawa M."/>
            <person name="Yamazaki M."/>
            <person name="Ninomiya K."/>
            <person name="Ishibashi T."/>
            <person name="Yamashita H."/>
            <person name="Murakawa K."/>
            <person name="Fujimori K."/>
            <person name="Tanai H."/>
            <person name="Kimata M."/>
            <person name="Watanabe M."/>
            <person name="Hiraoka S."/>
            <person name="Chiba Y."/>
            <person name="Ishida S."/>
            <person name="Ono Y."/>
            <person name="Takiguchi S."/>
            <person name="Watanabe S."/>
            <person name="Yosida M."/>
            <person name="Hotuta T."/>
            <person name="Kusano J."/>
            <person name="Kanehori K."/>
            <person name="Takahashi-Fujii A."/>
            <person name="Hara H."/>
            <person name="Tanase T.-O."/>
            <person name="Nomura Y."/>
            <person name="Togiya S."/>
            <person name="Komai F."/>
            <person name="Hara R."/>
            <person name="Takeuchi K."/>
            <person name="Arita M."/>
            <person name="Imose N."/>
            <person name="Musashino K."/>
            <person name="Yuuki H."/>
            <person name="Oshima A."/>
            <person name="Sasaki N."/>
            <person name="Aotsuka S."/>
            <person name="Yoshikawa Y."/>
            <person name="Matsunawa H."/>
            <person name="Ichihara T."/>
            <person name="Shiohata N."/>
            <person name="Sano S."/>
            <person name="Moriya S."/>
            <person name="Momiyama H."/>
            <person name="Satoh N."/>
            <person name="Takami S."/>
            <person name="Terashima Y."/>
            <person name="Suzuki O."/>
            <person name="Nakagawa S."/>
            <person name="Senoh A."/>
            <person name="Mizoguchi H."/>
            <person name="Goto Y."/>
            <person name="Shimizu F."/>
            <person name="Wakebe H."/>
            <person name="Hishigaki H."/>
            <person name="Watanabe T."/>
            <person name="Sugiyama A."/>
            <person name="Takemoto M."/>
            <person name="Kawakami B."/>
            <person name="Yamazaki M."/>
            <person name="Watanabe K."/>
            <person name="Kumagai A."/>
            <person name="Itakura S."/>
            <person name="Fukuzumi Y."/>
            <person name="Fujimori Y."/>
            <person name="Komiyama M."/>
            <person name="Tashiro H."/>
            <person name="Tanigami A."/>
            <person name="Fujiwara T."/>
            <person name="Ono T."/>
            <person name="Yamada K."/>
            <person name="Fujii Y."/>
            <person name="Ozaki K."/>
            <person name="Hirao M."/>
            <person name="Ohmori Y."/>
            <person name="Kawabata A."/>
            <person name="Hikiji T."/>
            <person name="Kobatake N."/>
            <person name="Inagaki H."/>
            <person name="Ikema Y."/>
            <person name="Okamoto S."/>
            <person name="Okitani R."/>
            <person name="Kawakami T."/>
            <person name="Noguchi S."/>
            <person name="Itoh T."/>
            <person name="Shigeta K."/>
            <person name="Senba T."/>
            <person name="Matsumura K."/>
            <person name="Nakajima Y."/>
            <person name="Mizuno T."/>
            <person name="Morinaga M."/>
            <person name="Sasaki M."/>
            <person name="Togashi T."/>
            <person name="Oyama M."/>
            <person name="Hata H."/>
            <person name="Watanabe M."/>
            <person name="Komatsu T."/>
            <person name="Mizushima-Sugano J."/>
            <person name="Satoh T."/>
            <person name="Shirai Y."/>
            <person name="Takahashi Y."/>
            <person name="Nakagawa K."/>
            <person name="Okumura K."/>
            <person name="Nagase T."/>
            <person name="Nomura N."/>
            <person name="Kikuchi H."/>
            <person name="Masuho Y."/>
            <person name="Yamashita R."/>
            <person name="Nakai K."/>
            <person name="Yada T."/>
            <person name="Nakamura Y."/>
            <person name="Ohara O."/>
            <person name="Isogai T."/>
            <person name="Sugano S."/>
        </authorList>
    </citation>
    <scope>NUCLEOTIDE SEQUENCE [LARGE SCALE MRNA]</scope>
    <source>
        <tissue>Testis</tissue>
    </source>
</reference>
<reference key="5">
    <citation type="journal article" date="2003" name="Nature">
        <title>The DNA sequence of human chromosome 7.</title>
        <authorList>
            <person name="Hillier L.W."/>
            <person name="Fulton R.S."/>
            <person name="Fulton L.A."/>
            <person name="Graves T.A."/>
            <person name="Pepin K.H."/>
            <person name="Wagner-McPherson C."/>
            <person name="Layman D."/>
            <person name="Maas J."/>
            <person name="Jaeger S."/>
            <person name="Walker R."/>
            <person name="Wylie K."/>
            <person name="Sekhon M."/>
            <person name="Becker M.C."/>
            <person name="O'Laughlin M.D."/>
            <person name="Schaller M.E."/>
            <person name="Fewell G.A."/>
            <person name="Delehaunty K.D."/>
            <person name="Miner T.L."/>
            <person name="Nash W.E."/>
            <person name="Cordes M."/>
            <person name="Du H."/>
            <person name="Sun H."/>
            <person name="Edwards J."/>
            <person name="Bradshaw-Cordum H."/>
            <person name="Ali J."/>
            <person name="Andrews S."/>
            <person name="Isak A."/>
            <person name="Vanbrunt A."/>
            <person name="Nguyen C."/>
            <person name="Du F."/>
            <person name="Lamar B."/>
            <person name="Courtney L."/>
            <person name="Kalicki J."/>
            <person name="Ozersky P."/>
            <person name="Bielicki L."/>
            <person name="Scott K."/>
            <person name="Holmes A."/>
            <person name="Harkins R."/>
            <person name="Harris A."/>
            <person name="Strong C.M."/>
            <person name="Hou S."/>
            <person name="Tomlinson C."/>
            <person name="Dauphin-Kohlberg S."/>
            <person name="Kozlowicz-Reilly A."/>
            <person name="Leonard S."/>
            <person name="Rohlfing T."/>
            <person name="Rock S.M."/>
            <person name="Tin-Wollam A.-M."/>
            <person name="Abbott A."/>
            <person name="Minx P."/>
            <person name="Maupin R."/>
            <person name="Strowmatt C."/>
            <person name="Latreille P."/>
            <person name="Miller N."/>
            <person name="Johnson D."/>
            <person name="Murray J."/>
            <person name="Woessner J.P."/>
            <person name="Wendl M.C."/>
            <person name="Yang S.-P."/>
            <person name="Schultz B.R."/>
            <person name="Wallis J.W."/>
            <person name="Spieth J."/>
            <person name="Bieri T.A."/>
            <person name="Nelson J.O."/>
            <person name="Berkowicz N."/>
            <person name="Wohldmann P.E."/>
            <person name="Cook L.L."/>
            <person name="Hickenbotham M.T."/>
            <person name="Eldred J."/>
            <person name="Williams D."/>
            <person name="Bedell J.A."/>
            <person name="Mardis E.R."/>
            <person name="Clifton S.W."/>
            <person name="Chissoe S.L."/>
            <person name="Marra M.A."/>
            <person name="Raymond C."/>
            <person name="Haugen E."/>
            <person name="Gillett W."/>
            <person name="Zhou Y."/>
            <person name="James R."/>
            <person name="Phelps K."/>
            <person name="Iadanoto S."/>
            <person name="Bubb K."/>
            <person name="Simms E."/>
            <person name="Levy R."/>
            <person name="Clendenning J."/>
            <person name="Kaul R."/>
            <person name="Kent W.J."/>
            <person name="Furey T.S."/>
            <person name="Baertsch R.A."/>
            <person name="Brent M.R."/>
            <person name="Keibler E."/>
            <person name="Flicek P."/>
            <person name="Bork P."/>
            <person name="Suyama M."/>
            <person name="Bailey J.A."/>
            <person name="Portnoy M.E."/>
            <person name="Torrents D."/>
            <person name="Chinwalla A.T."/>
            <person name="Gish W.R."/>
            <person name="Eddy S.R."/>
            <person name="McPherson J.D."/>
            <person name="Olson M.V."/>
            <person name="Eichler E.E."/>
            <person name="Green E.D."/>
            <person name="Waterston R.H."/>
            <person name="Wilson R.K."/>
        </authorList>
    </citation>
    <scope>NUCLEOTIDE SEQUENCE [LARGE SCALE GENOMIC DNA]</scope>
</reference>
<reference key="6">
    <citation type="journal article" date="2003" name="Science">
        <title>Human chromosome 7: DNA sequence and biology.</title>
        <authorList>
            <person name="Scherer S.W."/>
            <person name="Cheung J."/>
            <person name="MacDonald J.R."/>
            <person name="Osborne L.R."/>
            <person name="Nakabayashi K."/>
            <person name="Herbrick J.-A."/>
            <person name="Carson A.R."/>
            <person name="Parker-Katiraee L."/>
            <person name="Skaug J."/>
            <person name="Khaja R."/>
            <person name="Zhang J."/>
            <person name="Hudek A.K."/>
            <person name="Li M."/>
            <person name="Haddad M."/>
            <person name="Duggan G.E."/>
            <person name="Fernandez B.A."/>
            <person name="Kanematsu E."/>
            <person name="Gentles S."/>
            <person name="Christopoulos C.C."/>
            <person name="Choufani S."/>
            <person name="Kwasnicka D."/>
            <person name="Zheng X.H."/>
            <person name="Lai Z."/>
            <person name="Nusskern D.R."/>
            <person name="Zhang Q."/>
            <person name="Gu Z."/>
            <person name="Lu F."/>
            <person name="Zeesman S."/>
            <person name="Nowaczyk M.J."/>
            <person name="Teshima I."/>
            <person name="Chitayat D."/>
            <person name="Shuman C."/>
            <person name="Weksberg R."/>
            <person name="Zackai E.H."/>
            <person name="Grebe T.A."/>
            <person name="Cox S.R."/>
            <person name="Kirkpatrick S.J."/>
            <person name="Rahman N."/>
            <person name="Friedman J.M."/>
            <person name="Heng H.H.Q."/>
            <person name="Pelicci P.G."/>
            <person name="Lo-Coco F."/>
            <person name="Belloni E."/>
            <person name="Shaffer L.G."/>
            <person name="Pober B."/>
            <person name="Morton C.C."/>
            <person name="Gusella J.F."/>
            <person name="Bruns G.A.P."/>
            <person name="Korf B.R."/>
            <person name="Quade B.J."/>
            <person name="Ligon A.H."/>
            <person name="Ferguson H."/>
            <person name="Higgins A.W."/>
            <person name="Leach N.T."/>
            <person name="Herrick S.R."/>
            <person name="Lemyre E."/>
            <person name="Farra C.G."/>
            <person name="Kim H.-G."/>
            <person name="Summers A.M."/>
            <person name="Gripp K.W."/>
            <person name="Roberts W."/>
            <person name="Szatmari P."/>
            <person name="Winsor E.J.T."/>
            <person name="Grzeschik K.-H."/>
            <person name="Teebi A."/>
            <person name="Minassian B.A."/>
            <person name="Kere J."/>
            <person name="Armengol L."/>
            <person name="Pujana M.A."/>
            <person name="Estivill X."/>
            <person name="Wilson M.D."/>
            <person name="Koop B.F."/>
            <person name="Tosi S."/>
            <person name="Moore G.E."/>
            <person name="Boright A.P."/>
            <person name="Zlotorynski E."/>
            <person name="Kerem B."/>
            <person name="Kroisel P.M."/>
            <person name="Petek E."/>
            <person name="Oscier D.G."/>
            <person name="Mould S.J."/>
            <person name="Doehner H."/>
            <person name="Doehner K."/>
            <person name="Rommens J.M."/>
            <person name="Vincent J.B."/>
            <person name="Venter J.C."/>
            <person name="Li P.W."/>
            <person name="Mural R.J."/>
            <person name="Adams M.D."/>
            <person name="Tsui L.-C."/>
        </authorList>
    </citation>
    <scope>NUCLEOTIDE SEQUENCE [LARGE SCALE GENOMIC DNA]</scope>
    <scope>VARIANT PRO-56</scope>
</reference>
<reference key="7">
    <citation type="submission" date="2005-09" db="EMBL/GenBank/DDBJ databases">
        <authorList>
            <person name="Mural R.J."/>
            <person name="Istrail S."/>
            <person name="Sutton G.G."/>
            <person name="Florea L."/>
            <person name="Halpern A.L."/>
            <person name="Mobarry C.M."/>
            <person name="Lippert R."/>
            <person name="Walenz B."/>
            <person name="Shatkay H."/>
            <person name="Dew I."/>
            <person name="Miller J.R."/>
            <person name="Flanigan M.J."/>
            <person name="Edwards N.J."/>
            <person name="Bolanos R."/>
            <person name="Fasulo D."/>
            <person name="Halldorsson B.V."/>
            <person name="Hannenhalli S."/>
            <person name="Turner R."/>
            <person name="Yooseph S."/>
            <person name="Lu F."/>
            <person name="Nusskern D.R."/>
            <person name="Shue B.C."/>
            <person name="Zheng X.H."/>
            <person name="Zhong F."/>
            <person name="Delcher A.L."/>
            <person name="Huson D.H."/>
            <person name="Kravitz S.A."/>
            <person name="Mouchard L."/>
            <person name="Reinert K."/>
            <person name="Remington K.A."/>
            <person name="Clark A.G."/>
            <person name="Waterman M.S."/>
            <person name="Eichler E.E."/>
            <person name="Adams M.D."/>
            <person name="Hunkapiller M.W."/>
            <person name="Myers E.W."/>
            <person name="Venter J.C."/>
        </authorList>
    </citation>
    <scope>NUCLEOTIDE SEQUENCE [LARGE SCALE GENOMIC DNA]</scope>
    <scope>VARIANT PRO-56</scope>
</reference>
<reference key="8">
    <citation type="journal article" date="2004" name="Genome Res.">
        <title>The status, quality, and expansion of the NIH full-length cDNA project: the Mammalian Gene Collection (MGC).</title>
        <authorList>
            <consortium name="The MGC Project Team"/>
        </authorList>
    </citation>
    <scope>NUCLEOTIDE SEQUENCE [LARGE SCALE MRNA]</scope>
    <scope>VARIANT PRO-56</scope>
    <source>
        <tissue>Ovary</tissue>
    </source>
</reference>
<reference key="9">
    <citation type="journal article" date="2007" name="BMC Genomics">
        <title>The full-ORF clone resource of the German cDNA consortium.</title>
        <authorList>
            <person name="Bechtel S."/>
            <person name="Rosenfelder H."/>
            <person name="Duda A."/>
            <person name="Schmidt C.P."/>
            <person name="Ernst U."/>
            <person name="Wellenreuther R."/>
            <person name="Mehrle A."/>
            <person name="Schuster C."/>
            <person name="Bahr A."/>
            <person name="Bloecker H."/>
            <person name="Heubner D."/>
            <person name="Hoerlein A."/>
            <person name="Michel G."/>
            <person name="Wedler H."/>
            <person name="Koehrer K."/>
            <person name="Ottenwaelder B."/>
            <person name="Poustka A."/>
            <person name="Wiemann S."/>
            <person name="Schupp I."/>
        </authorList>
    </citation>
    <scope>NUCLEOTIDE SEQUENCE [LARGE SCALE MRNA] OF 11-450</scope>
    <source>
        <tissue>Testis</tissue>
    </source>
</reference>
<reference key="10">
    <citation type="journal article" date="2006" name="Biochim. Biophys. Acta">
        <title>Myristoylation of human LanC-like protein 2 (LANCL2) is essential for the interaction with the plasma membrane and the increase in cellular sensitivity to adriamycin.</title>
        <authorList>
            <person name="Landlinger C."/>
            <person name="Salzer U."/>
            <person name="Prohaska R."/>
        </authorList>
    </citation>
    <scope>SUBCELLULAR LOCATION</scope>
    <scope>MYRISTOYLATION AT GLY-2</scope>
    <scope>MUTAGENESIS OF GLY-2</scope>
    <scope>INTERACTION WITH INOSITOL PHOSPHOLIPIDS</scope>
</reference>
<reference key="11">
    <citation type="journal article" date="2003" name="Cancer Res.">
        <title>Lanthionine synthetase components C-like 2 increases cellular sensitivity to adriamycin by decreasing the expression of P-glycoprotein through a transcription-mediated mechanism.</title>
        <authorList>
            <person name="Park S."/>
            <person name="James C.D."/>
        </authorList>
    </citation>
    <scope>SUBCELLULAR LOCATION</scope>
    <scope>POSSIBLE FUNCTION IN CELLULAR SENSITIVITY TO ADRIAMYCIN</scope>
</reference>
<reference key="12">
    <citation type="journal article" date="2009" name="J. Biol. Chem.">
        <title>LANCL2 is necessary for abscisic acid binding and signaling in human granulocytes and in rat insulinoma cells.</title>
        <authorList>
            <person name="Sturla L."/>
            <person name="Fresia C."/>
            <person name="Guida L."/>
            <person name="Bruzzone S."/>
            <person name="Scarfi' S."/>
            <person name="Usai C."/>
            <person name="Fruscione F."/>
            <person name="Magnone M."/>
            <person name="Millo E."/>
            <person name="Basile G."/>
            <person name="Grozio A."/>
            <person name="Jacchetti E."/>
            <person name="Allegretti M."/>
            <person name="De Flora A."/>
            <person name="Zocchi E."/>
        </authorList>
    </citation>
    <scope>FUNCTION</scope>
</reference>
<reference key="13">
    <citation type="journal article" date="2011" name="BMC Syst. Biol.">
        <title>Initial characterization of the human central proteome.</title>
        <authorList>
            <person name="Burkard T.R."/>
            <person name="Planyavsky M."/>
            <person name="Kaupe I."/>
            <person name="Breitwieser F.P."/>
            <person name="Buerckstuemmer T."/>
            <person name="Bennett K.L."/>
            <person name="Superti-Furga G."/>
            <person name="Colinge J."/>
        </authorList>
    </citation>
    <scope>IDENTIFICATION BY MASS SPECTROMETRY [LARGE SCALE ANALYSIS]</scope>
</reference>
<reference key="14">
    <citation type="journal article" date="2014" name="J. Proteomics">
        <title>An enzyme assisted RP-RPLC approach for in-depth analysis of human liver phosphoproteome.</title>
        <authorList>
            <person name="Bian Y."/>
            <person name="Song C."/>
            <person name="Cheng K."/>
            <person name="Dong M."/>
            <person name="Wang F."/>
            <person name="Huang J."/>
            <person name="Sun D."/>
            <person name="Wang L."/>
            <person name="Ye M."/>
            <person name="Zou H."/>
        </authorList>
    </citation>
    <scope>IDENTIFICATION BY MASS SPECTROMETRY [LARGE SCALE ANALYSIS]</scope>
    <source>
        <tissue>Liver</tissue>
    </source>
</reference>